<name>LIPA_TROW8</name>
<reference key="1">
    <citation type="journal article" date="2003" name="Lancet">
        <title>Sequencing and analysis of the genome of the Whipple's disease bacterium Tropheryma whipplei.</title>
        <authorList>
            <person name="Bentley S.D."/>
            <person name="Maiwald M."/>
            <person name="Murphy L.D."/>
            <person name="Pallen M.J."/>
            <person name="Yeats C.A."/>
            <person name="Dover L.G."/>
            <person name="Norbertczak H.T."/>
            <person name="Besra G.S."/>
            <person name="Quail M.A."/>
            <person name="Harris D.E."/>
            <person name="von Herbay A."/>
            <person name="Goble A."/>
            <person name="Rutter S."/>
            <person name="Squares R."/>
            <person name="Squares S."/>
            <person name="Barrell B.G."/>
            <person name="Parkhill J."/>
            <person name="Relman D.A."/>
        </authorList>
    </citation>
    <scope>NUCLEOTIDE SEQUENCE [LARGE SCALE GENOMIC DNA]</scope>
    <source>
        <strain>TW08/27</strain>
    </source>
</reference>
<accession>Q83NN8</accession>
<comment type="function">
    <text evidence="1">Catalyzes the radical-mediated insertion of two sulfur atoms into the C-6 and C-8 positions of the octanoyl moiety bound to the lipoyl domains of lipoate-dependent enzymes, thereby converting the octanoylated domains into lipoylated derivatives.</text>
</comment>
<comment type="catalytic activity">
    <reaction evidence="1">
        <text>[[Fe-S] cluster scaffold protein carrying a second [4Fe-4S](2+) cluster] + N(6)-octanoyl-L-lysyl-[protein] + 2 oxidized [2Fe-2S]-[ferredoxin] + 2 S-adenosyl-L-methionine + 4 H(+) = [[Fe-S] cluster scaffold protein] + N(6)-[(R)-dihydrolipoyl]-L-lysyl-[protein] + 4 Fe(3+) + 2 hydrogen sulfide + 2 5'-deoxyadenosine + 2 L-methionine + 2 reduced [2Fe-2S]-[ferredoxin]</text>
        <dbReference type="Rhea" id="RHEA:16585"/>
        <dbReference type="Rhea" id="RHEA-COMP:9928"/>
        <dbReference type="Rhea" id="RHEA-COMP:10000"/>
        <dbReference type="Rhea" id="RHEA-COMP:10001"/>
        <dbReference type="Rhea" id="RHEA-COMP:10475"/>
        <dbReference type="Rhea" id="RHEA-COMP:14568"/>
        <dbReference type="Rhea" id="RHEA-COMP:14569"/>
        <dbReference type="ChEBI" id="CHEBI:15378"/>
        <dbReference type="ChEBI" id="CHEBI:17319"/>
        <dbReference type="ChEBI" id="CHEBI:29034"/>
        <dbReference type="ChEBI" id="CHEBI:29919"/>
        <dbReference type="ChEBI" id="CHEBI:33722"/>
        <dbReference type="ChEBI" id="CHEBI:33737"/>
        <dbReference type="ChEBI" id="CHEBI:33738"/>
        <dbReference type="ChEBI" id="CHEBI:57844"/>
        <dbReference type="ChEBI" id="CHEBI:59789"/>
        <dbReference type="ChEBI" id="CHEBI:78809"/>
        <dbReference type="ChEBI" id="CHEBI:83100"/>
        <dbReference type="EC" id="2.8.1.8"/>
    </reaction>
</comment>
<comment type="cofactor">
    <cofactor evidence="1">
        <name>[4Fe-4S] cluster</name>
        <dbReference type="ChEBI" id="CHEBI:49883"/>
    </cofactor>
    <text evidence="1">Binds 2 [4Fe-4S] clusters per subunit. One cluster is coordinated with 3 cysteines and an exchangeable S-adenosyl-L-methionine.</text>
</comment>
<comment type="pathway">
    <text evidence="1">Protein modification; protein lipoylation via endogenous pathway; protein N(6)-(lipoyl)lysine from octanoyl-[acyl-carrier-protein]: step 2/2.</text>
</comment>
<comment type="subcellular location">
    <subcellularLocation>
        <location evidence="1">Cytoplasm</location>
    </subcellularLocation>
</comment>
<comment type="similarity">
    <text evidence="1">Belongs to the radical SAM superfamily. Lipoyl synthase family.</text>
</comment>
<evidence type="ECO:0000255" key="1">
    <source>
        <dbReference type="HAMAP-Rule" id="MF_00206"/>
    </source>
</evidence>
<evidence type="ECO:0000255" key="2">
    <source>
        <dbReference type="PROSITE-ProRule" id="PRU01266"/>
    </source>
</evidence>
<evidence type="ECO:0000256" key="3">
    <source>
        <dbReference type="SAM" id="MobiDB-lite"/>
    </source>
</evidence>
<proteinExistence type="inferred from homology"/>
<dbReference type="EC" id="2.8.1.8" evidence="1"/>
<dbReference type="EMBL" id="BX251411">
    <property type="protein sequence ID" value="CAD66975.1"/>
    <property type="molecule type" value="Genomic_DNA"/>
</dbReference>
<dbReference type="SMR" id="Q83NN8"/>
<dbReference type="KEGG" id="tws:TW301"/>
<dbReference type="HOGENOM" id="CLU_033144_2_1_11"/>
<dbReference type="UniPathway" id="UPA00538">
    <property type="reaction ID" value="UER00593"/>
</dbReference>
<dbReference type="GO" id="GO:0005737">
    <property type="term" value="C:cytoplasm"/>
    <property type="evidence" value="ECO:0007669"/>
    <property type="project" value="UniProtKB-SubCell"/>
</dbReference>
<dbReference type="GO" id="GO:0051539">
    <property type="term" value="F:4 iron, 4 sulfur cluster binding"/>
    <property type="evidence" value="ECO:0007669"/>
    <property type="project" value="UniProtKB-UniRule"/>
</dbReference>
<dbReference type="GO" id="GO:0016992">
    <property type="term" value="F:lipoate synthase activity"/>
    <property type="evidence" value="ECO:0007669"/>
    <property type="project" value="UniProtKB-UniRule"/>
</dbReference>
<dbReference type="GO" id="GO:0046872">
    <property type="term" value="F:metal ion binding"/>
    <property type="evidence" value="ECO:0007669"/>
    <property type="project" value="UniProtKB-KW"/>
</dbReference>
<dbReference type="CDD" id="cd01335">
    <property type="entry name" value="Radical_SAM"/>
    <property type="match status" value="1"/>
</dbReference>
<dbReference type="Gene3D" id="3.20.20.70">
    <property type="entry name" value="Aldolase class I"/>
    <property type="match status" value="1"/>
</dbReference>
<dbReference type="HAMAP" id="MF_00206">
    <property type="entry name" value="Lipoyl_synth"/>
    <property type="match status" value="1"/>
</dbReference>
<dbReference type="InterPro" id="IPR013785">
    <property type="entry name" value="Aldolase_TIM"/>
</dbReference>
<dbReference type="InterPro" id="IPR006638">
    <property type="entry name" value="Elp3/MiaA/NifB-like_rSAM"/>
</dbReference>
<dbReference type="InterPro" id="IPR031691">
    <property type="entry name" value="LIAS_N"/>
</dbReference>
<dbReference type="InterPro" id="IPR003698">
    <property type="entry name" value="Lipoyl_synth"/>
</dbReference>
<dbReference type="InterPro" id="IPR007197">
    <property type="entry name" value="rSAM"/>
</dbReference>
<dbReference type="NCBIfam" id="TIGR00510">
    <property type="entry name" value="lipA"/>
    <property type="match status" value="1"/>
</dbReference>
<dbReference type="NCBIfam" id="NF004019">
    <property type="entry name" value="PRK05481.1"/>
    <property type="match status" value="1"/>
</dbReference>
<dbReference type="NCBIfam" id="NF009544">
    <property type="entry name" value="PRK12928.1"/>
    <property type="match status" value="1"/>
</dbReference>
<dbReference type="PANTHER" id="PTHR10949">
    <property type="entry name" value="LIPOYL SYNTHASE"/>
    <property type="match status" value="1"/>
</dbReference>
<dbReference type="PANTHER" id="PTHR10949:SF0">
    <property type="entry name" value="LIPOYL SYNTHASE, MITOCHONDRIAL"/>
    <property type="match status" value="1"/>
</dbReference>
<dbReference type="Pfam" id="PF16881">
    <property type="entry name" value="LIAS_N"/>
    <property type="match status" value="1"/>
</dbReference>
<dbReference type="Pfam" id="PF04055">
    <property type="entry name" value="Radical_SAM"/>
    <property type="match status" value="1"/>
</dbReference>
<dbReference type="PIRSF" id="PIRSF005963">
    <property type="entry name" value="Lipoyl_synth"/>
    <property type="match status" value="1"/>
</dbReference>
<dbReference type="SFLD" id="SFLDF00271">
    <property type="entry name" value="lipoyl_synthase"/>
    <property type="match status" value="1"/>
</dbReference>
<dbReference type="SFLD" id="SFLDG01058">
    <property type="entry name" value="lipoyl_synthase_like"/>
    <property type="match status" value="1"/>
</dbReference>
<dbReference type="SMART" id="SM00729">
    <property type="entry name" value="Elp3"/>
    <property type="match status" value="1"/>
</dbReference>
<dbReference type="SUPFAM" id="SSF102114">
    <property type="entry name" value="Radical SAM enzymes"/>
    <property type="match status" value="1"/>
</dbReference>
<dbReference type="PROSITE" id="PS51918">
    <property type="entry name" value="RADICAL_SAM"/>
    <property type="match status" value="1"/>
</dbReference>
<gene>
    <name evidence="1" type="primary">lipA</name>
    <name type="ordered locus">TW301</name>
</gene>
<sequence>MNDSGNSSKVNVRPPSAGLGAPSPGKRKMLRLEVRNSQVPIERKPSWIRARATIGTEYRKVQERVKKQNLRTVCQEAGCPNIYECWEDREATFLIGGSQCTRRCDFCQIDTGKPAELDLDEPKRVGQSVAQMKLRYATVTGVARDDLPDGGVWLYAETIREIHKQCPGSGVEILIPDFNGKPELLQQIFEAQPEVYAHNIETVPRIFRRIRPAFRYDRSLDVISQGQKAGMITKSNLILGMGETGEEVTQALRDLKSAGCDIVTITQYLRPSPRHLPVARWVKPQEFIEYKEQAKEIGFSGVLAGPLVRSSYRAGKLWAQSVKAKMVEIPERVRKLINEIEMQETSFRQAV</sequence>
<feature type="chain" id="PRO_0000102375" description="Lipoyl synthase">
    <location>
        <begin position="1"/>
        <end position="351"/>
    </location>
</feature>
<feature type="domain" description="Radical SAM core" evidence="2">
    <location>
        <begin position="86"/>
        <end position="300"/>
    </location>
</feature>
<feature type="region of interest" description="Disordered" evidence="3">
    <location>
        <begin position="1"/>
        <end position="27"/>
    </location>
</feature>
<feature type="compositionally biased region" description="Polar residues" evidence="3">
    <location>
        <begin position="1"/>
        <end position="10"/>
    </location>
</feature>
<feature type="compositionally biased region" description="Low complexity" evidence="3">
    <location>
        <begin position="14"/>
        <end position="24"/>
    </location>
</feature>
<feature type="binding site" evidence="1">
    <location>
        <position position="74"/>
    </location>
    <ligand>
        <name>[4Fe-4S] cluster</name>
        <dbReference type="ChEBI" id="CHEBI:49883"/>
        <label>1</label>
    </ligand>
</feature>
<feature type="binding site" evidence="1">
    <location>
        <position position="79"/>
    </location>
    <ligand>
        <name>[4Fe-4S] cluster</name>
        <dbReference type="ChEBI" id="CHEBI:49883"/>
        <label>1</label>
    </ligand>
</feature>
<feature type="binding site" evidence="1">
    <location>
        <position position="85"/>
    </location>
    <ligand>
        <name>[4Fe-4S] cluster</name>
        <dbReference type="ChEBI" id="CHEBI:49883"/>
        <label>1</label>
    </ligand>
</feature>
<feature type="binding site" evidence="1">
    <location>
        <position position="100"/>
    </location>
    <ligand>
        <name>[4Fe-4S] cluster</name>
        <dbReference type="ChEBI" id="CHEBI:49883"/>
        <label>2</label>
        <note>4Fe-4S-S-AdoMet</note>
    </ligand>
</feature>
<feature type="binding site" evidence="1">
    <location>
        <position position="104"/>
    </location>
    <ligand>
        <name>[4Fe-4S] cluster</name>
        <dbReference type="ChEBI" id="CHEBI:49883"/>
        <label>2</label>
        <note>4Fe-4S-S-AdoMet</note>
    </ligand>
</feature>
<feature type="binding site" evidence="1">
    <location>
        <position position="107"/>
    </location>
    <ligand>
        <name>[4Fe-4S] cluster</name>
        <dbReference type="ChEBI" id="CHEBI:49883"/>
        <label>2</label>
        <note>4Fe-4S-S-AdoMet</note>
    </ligand>
</feature>
<feature type="binding site" evidence="1">
    <location>
        <position position="311"/>
    </location>
    <ligand>
        <name>[4Fe-4S] cluster</name>
        <dbReference type="ChEBI" id="CHEBI:49883"/>
        <label>1</label>
    </ligand>
</feature>
<keyword id="KW-0004">4Fe-4S</keyword>
<keyword id="KW-0963">Cytoplasm</keyword>
<keyword id="KW-0408">Iron</keyword>
<keyword id="KW-0411">Iron-sulfur</keyword>
<keyword id="KW-0479">Metal-binding</keyword>
<keyword id="KW-0949">S-adenosyl-L-methionine</keyword>
<keyword id="KW-0808">Transferase</keyword>
<protein>
    <recommendedName>
        <fullName evidence="1">Lipoyl synthase</fullName>
        <ecNumber evidence="1">2.8.1.8</ecNumber>
    </recommendedName>
    <alternativeName>
        <fullName evidence="1">Lip-syn</fullName>
        <shortName evidence="1">LS</shortName>
    </alternativeName>
    <alternativeName>
        <fullName evidence="1">Lipoate synthase</fullName>
    </alternativeName>
    <alternativeName>
        <fullName evidence="1">Lipoic acid synthase</fullName>
    </alternativeName>
    <alternativeName>
        <fullName evidence="1">Sulfur insertion protein LipA</fullName>
    </alternativeName>
</protein>
<organism>
    <name type="scientific">Tropheryma whipplei (strain TW08/27)</name>
    <name type="common">Whipple's bacillus</name>
    <dbReference type="NCBI Taxonomy" id="218496"/>
    <lineage>
        <taxon>Bacteria</taxon>
        <taxon>Bacillati</taxon>
        <taxon>Actinomycetota</taxon>
        <taxon>Actinomycetes</taxon>
        <taxon>Micrococcales</taxon>
        <taxon>Tropherymataceae</taxon>
        <taxon>Tropheryma</taxon>
    </lineage>
</organism>